<protein>
    <recommendedName>
        <fullName>N-acetylglucosamine repressor</fullName>
    </recommendedName>
</protein>
<organism>
    <name type="scientific">Shigella flexneri</name>
    <dbReference type="NCBI Taxonomy" id="623"/>
    <lineage>
        <taxon>Bacteria</taxon>
        <taxon>Pseudomonadati</taxon>
        <taxon>Pseudomonadota</taxon>
        <taxon>Gammaproteobacteria</taxon>
        <taxon>Enterobacterales</taxon>
        <taxon>Enterobacteriaceae</taxon>
        <taxon>Shigella</taxon>
    </lineage>
</organism>
<accession>P0AF23</accession>
<accession>P15301</accession>
<name>NAGC_SHIFL</name>
<gene>
    <name type="primary">nagC</name>
    <name type="ordered locus">SF0617</name>
    <name type="ordered locus">S0628</name>
</gene>
<sequence length="406" mass="44541">MTPGGQAQIGNVDLVKQLNSAAVYRLIDQYGPISRIQIAEQSQLAPASVTKITRQLIERGLIKEVDQQASTGGRRAISIVTETRNFHAIGVRLGRHDATITLFDLSSKVLAEEHYPLPERTQQTLEHALLNAIAQFIDSYQRKLRELIAISVILPGLVDPDSGKIHYMPHIQVENWGLVEALEERFKVTCFVGHDIRSLALAEHYFGASQDCEDSILVRVHRGTGAGIISNGRIFIGRNGNVGEIGHIQVEPLGERCHCGNFGCLETIAANAAIEQRVLNLLKQGYQSRVPLDDCTIKTICKAANKGDSLASEVIEYVGRHLGKTIAIAINLFNPQKIVIAGEITEADKVLLPAIESCINTQALKAFRTNLPVVRSELDHRSAIGAFALVKRAMLNGILLQHLLEN</sequence>
<proteinExistence type="inferred from homology"/>
<reference key="1">
    <citation type="journal article" date="2002" name="Nucleic Acids Res.">
        <title>Genome sequence of Shigella flexneri 2a: insights into pathogenicity through comparison with genomes of Escherichia coli K12 and O157.</title>
        <authorList>
            <person name="Jin Q."/>
            <person name="Yuan Z."/>
            <person name="Xu J."/>
            <person name="Wang Y."/>
            <person name="Shen Y."/>
            <person name="Lu W."/>
            <person name="Wang J."/>
            <person name="Liu H."/>
            <person name="Yang J."/>
            <person name="Yang F."/>
            <person name="Zhang X."/>
            <person name="Zhang J."/>
            <person name="Yang G."/>
            <person name="Wu H."/>
            <person name="Qu D."/>
            <person name="Dong J."/>
            <person name="Sun L."/>
            <person name="Xue Y."/>
            <person name="Zhao A."/>
            <person name="Gao Y."/>
            <person name="Zhu J."/>
            <person name="Kan B."/>
            <person name="Ding K."/>
            <person name="Chen S."/>
            <person name="Cheng H."/>
            <person name="Yao Z."/>
            <person name="He B."/>
            <person name="Chen R."/>
            <person name="Ma D."/>
            <person name="Qiang B."/>
            <person name="Wen Y."/>
            <person name="Hou Y."/>
            <person name="Yu J."/>
        </authorList>
    </citation>
    <scope>NUCLEOTIDE SEQUENCE [LARGE SCALE GENOMIC DNA]</scope>
    <source>
        <strain>301 / Serotype 2a</strain>
    </source>
</reference>
<reference key="2">
    <citation type="journal article" date="2003" name="Infect. Immun.">
        <title>Complete genome sequence and comparative genomics of Shigella flexneri serotype 2a strain 2457T.</title>
        <authorList>
            <person name="Wei J."/>
            <person name="Goldberg M.B."/>
            <person name="Burland V."/>
            <person name="Venkatesan M.M."/>
            <person name="Deng W."/>
            <person name="Fournier G."/>
            <person name="Mayhew G.F."/>
            <person name="Plunkett G. III"/>
            <person name="Rose D.J."/>
            <person name="Darling A."/>
            <person name="Mau B."/>
            <person name="Perna N.T."/>
            <person name="Payne S.M."/>
            <person name="Runyen-Janecky L.J."/>
            <person name="Zhou S."/>
            <person name="Schwartz D.C."/>
            <person name="Blattner F.R."/>
        </authorList>
    </citation>
    <scope>NUCLEOTIDE SEQUENCE [LARGE SCALE GENOMIC DNA]</scope>
    <source>
        <strain>ATCC 700930 / 2457T / Serotype 2a</strain>
    </source>
</reference>
<evidence type="ECO:0000250" key="1"/>
<evidence type="ECO:0000305" key="2"/>
<dbReference type="EMBL" id="AE005674">
    <property type="protein sequence ID" value="AAN42255.1"/>
    <property type="molecule type" value="Genomic_DNA"/>
</dbReference>
<dbReference type="EMBL" id="AE014073">
    <property type="protein sequence ID" value="AAP16126.1"/>
    <property type="molecule type" value="Genomic_DNA"/>
</dbReference>
<dbReference type="RefSeq" id="NP_706548.1">
    <property type="nucleotide sequence ID" value="NC_004337.2"/>
</dbReference>
<dbReference type="RefSeq" id="WP_000187594.1">
    <property type="nucleotide sequence ID" value="NZ_WPGW01000002.1"/>
</dbReference>
<dbReference type="SMR" id="P0AF23"/>
<dbReference type="STRING" id="198214.SF0617"/>
<dbReference type="PaxDb" id="198214-SF0617"/>
<dbReference type="GeneID" id="1023586"/>
<dbReference type="GeneID" id="93776809"/>
<dbReference type="KEGG" id="sfl:SF0617"/>
<dbReference type="KEGG" id="sfx:S0628"/>
<dbReference type="PATRIC" id="fig|198214.7.peg.720"/>
<dbReference type="HOGENOM" id="CLU_036604_13_1_6"/>
<dbReference type="Proteomes" id="UP000001006">
    <property type="component" value="Chromosome"/>
</dbReference>
<dbReference type="Proteomes" id="UP000002673">
    <property type="component" value="Chromosome"/>
</dbReference>
<dbReference type="GO" id="GO:0003677">
    <property type="term" value="F:DNA binding"/>
    <property type="evidence" value="ECO:0007669"/>
    <property type="project" value="UniProtKB-KW"/>
</dbReference>
<dbReference type="GO" id="GO:0003700">
    <property type="term" value="F:DNA-binding transcription factor activity"/>
    <property type="evidence" value="ECO:0007669"/>
    <property type="project" value="InterPro"/>
</dbReference>
<dbReference type="CDD" id="cd24075">
    <property type="entry name" value="ASKHA_ATPase_ROK_NagC"/>
    <property type="match status" value="1"/>
</dbReference>
<dbReference type="FunFam" id="3.30.420.40:FF:000059">
    <property type="entry name" value="N-acetylglucosamine operon transcriptional repressor"/>
    <property type="match status" value="1"/>
</dbReference>
<dbReference type="FunFam" id="3.30.420.40:FF:000065">
    <property type="entry name" value="N-acetylglucosamine repressor NagC"/>
    <property type="match status" value="1"/>
</dbReference>
<dbReference type="FunFam" id="1.10.10.10:FF:000045">
    <property type="entry name" value="ROK family transcriptional regulator"/>
    <property type="match status" value="1"/>
</dbReference>
<dbReference type="Gene3D" id="3.30.420.40">
    <property type="match status" value="2"/>
</dbReference>
<dbReference type="Gene3D" id="1.10.10.10">
    <property type="entry name" value="Winged helix-like DNA-binding domain superfamily/Winged helix DNA-binding domain"/>
    <property type="match status" value="1"/>
</dbReference>
<dbReference type="InterPro" id="IPR043129">
    <property type="entry name" value="ATPase_NBD"/>
</dbReference>
<dbReference type="InterPro" id="IPR000835">
    <property type="entry name" value="HTH_MarR-typ"/>
</dbReference>
<dbReference type="InterPro" id="IPR000600">
    <property type="entry name" value="ROK"/>
</dbReference>
<dbReference type="InterPro" id="IPR049874">
    <property type="entry name" value="ROK_cs"/>
</dbReference>
<dbReference type="InterPro" id="IPR036388">
    <property type="entry name" value="WH-like_DNA-bd_sf"/>
</dbReference>
<dbReference type="InterPro" id="IPR036390">
    <property type="entry name" value="WH_DNA-bd_sf"/>
</dbReference>
<dbReference type="PANTHER" id="PTHR18964:SF175">
    <property type="entry name" value="N-ACETYLGLUCOSAMINE REPRESSOR"/>
    <property type="match status" value="1"/>
</dbReference>
<dbReference type="PANTHER" id="PTHR18964">
    <property type="entry name" value="ROK (REPRESSOR, ORF, KINASE) FAMILY"/>
    <property type="match status" value="1"/>
</dbReference>
<dbReference type="Pfam" id="PF01047">
    <property type="entry name" value="MarR"/>
    <property type="match status" value="1"/>
</dbReference>
<dbReference type="Pfam" id="PF00480">
    <property type="entry name" value="ROK"/>
    <property type="match status" value="1"/>
</dbReference>
<dbReference type="SUPFAM" id="SSF53067">
    <property type="entry name" value="Actin-like ATPase domain"/>
    <property type="match status" value="1"/>
</dbReference>
<dbReference type="SUPFAM" id="SSF46785">
    <property type="entry name" value="Winged helix' DNA-binding domain"/>
    <property type="match status" value="1"/>
</dbReference>
<dbReference type="PROSITE" id="PS01125">
    <property type="entry name" value="ROK"/>
    <property type="match status" value="1"/>
</dbReference>
<feature type="chain" id="PRO_0000095694" description="N-acetylglucosamine repressor">
    <location>
        <begin position="1"/>
        <end position="406"/>
    </location>
</feature>
<feature type="DNA-binding region" description="H-T-H motif" evidence="1">
    <location>
        <begin position="35"/>
        <end position="44"/>
    </location>
</feature>
<comment type="function">
    <text evidence="1">Acts as a repressor of the nagEBACD operon and acts both as an activator and a repressor for the transcription of the glmSU operon.</text>
</comment>
<comment type="similarity">
    <text evidence="2">Belongs to the ROK (NagC/XylR) family.</text>
</comment>
<keyword id="KW-0010">Activator</keyword>
<keyword id="KW-0119">Carbohydrate metabolism</keyword>
<keyword id="KW-0238">DNA-binding</keyword>
<keyword id="KW-1185">Reference proteome</keyword>
<keyword id="KW-0678">Repressor</keyword>
<keyword id="KW-0804">Transcription</keyword>
<keyword id="KW-0805">Transcription regulation</keyword>